<proteinExistence type="inferred from homology"/>
<dbReference type="EMBL" id="CP000352">
    <property type="protein sequence ID" value="ABF08909.1"/>
    <property type="molecule type" value="Genomic_DNA"/>
</dbReference>
<dbReference type="RefSeq" id="WP_011516745.1">
    <property type="nucleotide sequence ID" value="NC_007973.1"/>
</dbReference>
<dbReference type="SMR" id="Q1LLR7"/>
<dbReference type="STRING" id="266264.Rmet_2030"/>
<dbReference type="KEGG" id="rme:Rmet_2030"/>
<dbReference type="eggNOG" id="COG0858">
    <property type="taxonomic scope" value="Bacteria"/>
</dbReference>
<dbReference type="HOGENOM" id="CLU_089475_5_1_4"/>
<dbReference type="Proteomes" id="UP000002429">
    <property type="component" value="Chromosome"/>
</dbReference>
<dbReference type="GO" id="GO:0005829">
    <property type="term" value="C:cytosol"/>
    <property type="evidence" value="ECO:0007669"/>
    <property type="project" value="TreeGrafter"/>
</dbReference>
<dbReference type="GO" id="GO:0043024">
    <property type="term" value="F:ribosomal small subunit binding"/>
    <property type="evidence" value="ECO:0007669"/>
    <property type="project" value="TreeGrafter"/>
</dbReference>
<dbReference type="GO" id="GO:0030490">
    <property type="term" value="P:maturation of SSU-rRNA"/>
    <property type="evidence" value="ECO:0007669"/>
    <property type="project" value="UniProtKB-UniRule"/>
</dbReference>
<dbReference type="Gene3D" id="3.30.300.20">
    <property type="match status" value="1"/>
</dbReference>
<dbReference type="HAMAP" id="MF_00003">
    <property type="entry name" value="RbfA"/>
    <property type="match status" value="1"/>
</dbReference>
<dbReference type="InterPro" id="IPR015946">
    <property type="entry name" value="KH_dom-like_a/b"/>
</dbReference>
<dbReference type="InterPro" id="IPR000238">
    <property type="entry name" value="RbfA"/>
</dbReference>
<dbReference type="InterPro" id="IPR023799">
    <property type="entry name" value="RbfA_dom_sf"/>
</dbReference>
<dbReference type="NCBIfam" id="TIGR00082">
    <property type="entry name" value="rbfA"/>
    <property type="match status" value="1"/>
</dbReference>
<dbReference type="PANTHER" id="PTHR33515">
    <property type="entry name" value="RIBOSOME-BINDING FACTOR A, CHLOROPLASTIC-RELATED"/>
    <property type="match status" value="1"/>
</dbReference>
<dbReference type="PANTHER" id="PTHR33515:SF1">
    <property type="entry name" value="RIBOSOME-BINDING FACTOR A, CHLOROPLASTIC-RELATED"/>
    <property type="match status" value="1"/>
</dbReference>
<dbReference type="Pfam" id="PF02033">
    <property type="entry name" value="RBFA"/>
    <property type="match status" value="1"/>
</dbReference>
<dbReference type="SUPFAM" id="SSF89919">
    <property type="entry name" value="Ribosome-binding factor A, RbfA"/>
    <property type="match status" value="1"/>
</dbReference>
<organism>
    <name type="scientific">Cupriavidus metallidurans (strain ATCC 43123 / DSM 2839 / NBRC 102507 / CH34)</name>
    <name type="common">Ralstonia metallidurans</name>
    <dbReference type="NCBI Taxonomy" id="266264"/>
    <lineage>
        <taxon>Bacteria</taxon>
        <taxon>Pseudomonadati</taxon>
        <taxon>Pseudomonadota</taxon>
        <taxon>Betaproteobacteria</taxon>
        <taxon>Burkholderiales</taxon>
        <taxon>Burkholderiaceae</taxon>
        <taxon>Cupriavidus</taxon>
    </lineage>
</organism>
<keyword id="KW-0963">Cytoplasm</keyword>
<keyword id="KW-1185">Reference proteome</keyword>
<keyword id="KW-0690">Ribosome biogenesis</keyword>
<protein>
    <recommendedName>
        <fullName evidence="1">Ribosome-binding factor A</fullName>
    </recommendedName>
</protein>
<gene>
    <name evidence="1" type="primary">rbfA</name>
    <name type="ordered locus">Rmet_2030</name>
</gene>
<sequence length="123" mass="13895">MAKKGNITSRNLRLSDQIQKELAEMIQREIRDPRLGLVTLQSVSLTPDYAHAKVYFTVLGAEPETAAAILKEKAGYLHSLLFKRLHIHTVPTLHFHHDTSVEHAIEMSKLINEANATRAKDDE</sequence>
<accession>Q1LLR7</accession>
<reference key="1">
    <citation type="journal article" date="2010" name="PLoS ONE">
        <title>The complete genome sequence of Cupriavidus metallidurans strain CH34, a master survivalist in harsh and anthropogenic environments.</title>
        <authorList>
            <person name="Janssen P.J."/>
            <person name="Van Houdt R."/>
            <person name="Moors H."/>
            <person name="Monsieurs P."/>
            <person name="Morin N."/>
            <person name="Michaux A."/>
            <person name="Benotmane M.A."/>
            <person name="Leys N."/>
            <person name="Vallaeys T."/>
            <person name="Lapidus A."/>
            <person name="Monchy S."/>
            <person name="Medigue C."/>
            <person name="Taghavi S."/>
            <person name="McCorkle S."/>
            <person name="Dunn J."/>
            <person name="van der Lelie D."/>
            <person name="Mergeay M."/>
        </authorList>
    </citation>
    <scope>NUCLEOTIDE SEQUENCE [LARGE SCALE GENOMIC DNA]</scope>
    <source>
        <strain>ATCC 43123 / DSM 2839 / NBRC 102507 / CH34</strain>
    </source>
</reference>
<evidence type="ECO:0000255" key="1">
    <source>
        <dbReference type="HAMAP-Rule" id="MF_00003"/>
    </source>
</evidence>
<comment type="function">
    <text evidence="1">One of several proteins that assist in the late maturation steps of the functional core of the 30S ribosomal subunit. Associates with free 30S ribosomal subunits (but not with 30S subunits that are part of 70S ribosomes or polysomes). Required for efficient processing of 16S rRNA. May interact with the 5'-terminal helix region of 16S rRNA.</text>
</comment>
<comment type="subunit">
    <text evidence="1">Monomer. Binds 30S ribosomal subunits, but not 50S ribosomal subunits or 70S ribosomes.</text>
</comment>
<comment type="subcellular location">
    <subcellularLocation>
        <location evidence="1">Cytoplasm</location>
    </subcellularLocation>
</comment>
<comment type="similarity">
    <text evidence="1">Belongs to the RbfA family.</text>
</comment>
<name>RBFA_CUPMC</name>
<feature type="chain" id="PRO_1000000185" description="Ribosome-binding factor A">
    <location>
        <begin position="1"/>
        <end position="123"/>
    </location>
</feature>